<dbReference type="EMBL" id="EU079025">
    <property type="protein sequence ID" value="ABU52996.1"/>
    <property type="molecule type" value="mRNA"/>
</dbReference>
<dbReference type="CCDS" id="CCDS49703.1"/>
<dbReference type="RefSeq" id="NP_001156352.1">
    <property type="nucleotide sequence ID" value="NM_001162880.1"/>
</dbReference>
<dbReference type="RefSeq" id="NP_001156354.1">
    <property type="nucleotide sequence ID" value="NM_001162882.1"/>
</dbReference>
<dbReference type="PDB" id="4R3Q">
    <property type="method" value="X-ray"/>
    <property type="resolution" value="1.90 A"/>
    <property type="chains" value="A/B=1-88"/>
</dbReference>
<dbReference type="PDB" id="6H86">
    <property type="method" value="X-ray"/>
    <property type="resolution" value="1.90 A"/>
    <property type="chains" value="A/B=1-88"/>
</dbReference>
<dbReference type="PDBsum" id="4R3Q"/>
<dbReference type="PDBsum" id="6H86"/>
<dbReference type="SMR" id="B5KM66"/>
<dbReference type="BioGRID" id="217496">
    <property type="interactions" value="4"/>
</dbReference>
<dbReference type="FunCoup" id="B5KM66">
    <property type="interactions" value="793"/>
</dbReference>
<dbReference type="IntAct" id="B5KM66">
    <property type="interactions" value="2"/>
</dbReference>
<dbReference type="STRING" id="10090.ENSMUSP00000131766"/>
<dbReference type="iPTMnet" id="B5KM66"/>
<dbReference type="PhosphoSitePlus" id="B5KM66"/>
<dbReference type="PaxDb" id="10090-ENSMUSP00000131766"/>
<dbReference type="ProteomicsDB" id="258684"/>
<dbReference type="Antibodypedia" id="62384">
    <property type="antibodies" value="13 antibodies from 8 providers"/>
</dbReference>
<dbReference type="Ensembl" id="ENSMUST00000109314.9">
    <property type="protein sequence ID" value="ENSMUSP00000104937.3"/>
    <property type="gene ID" value="ENSMUSG00000078938.10"/>
</dbReference>
<dbReference type="Ensembl" id="ENSMUST00000167959.2">
    <property type="protein sequence ID" value="ENSMUSP00000131766.2"/>
    <property type="gene ID" value="ENSMUSG00000078938.10"/>
</dbReference>
<dbReference type="GeneID" id="75459"/>
<dbReference type="KEGG" id="mmu:75459"/>
<dbReference type="UCSC" id="uc007xgo.2">
    <property type="organism name" value="mouse"/>
</dbReference>
<dbReference type="AGR" id="MGI:1922709"/>
<dbReference type="CTD" id="644186"/>
<dbReference type="MGI" id="MGI:1922709">
    <property type="gene designation" value="Syce3"/>
</dbReference>
<dbReference type="VEuPathDB" id="HostDB:ENSMUSG00000078938"/>
<dbReference type="eggNOG" id="ENOG502S4TF">
    <property type="taxonomic scope" value="Eukaryota"/>
</dbReference>
<dbReference type="GeneTree" id="ENSGT00390000009978"/>
<dbReference type="HOGENOM" id="CLU_2548975_0_0_1"/>
<dbReference type="InParanoid" id="B5KM66"/>
<dbReference type="OMA" id="KWQEVLM"/>
<dbReference type="OrthoDB" id="9944849at2759"/>
<dbReference type="PhylomeDB" id="B5KM66"/>
<dbReference type="BioGRID-ORCS" id="75459">
    <property type="hits" value="0 hits in 78 CRISPR screens"/>
</dbReference>
<dbReference type="EvolutionaryTrace" id="B5KM66"/>
<dbReference type="PRO" id="PR:B5KM66"/>
<dbReference type="Proteomes" id="UP000000589">
    <property type="component" value="Chromosome 15"/>
</dbReference>
<dbReference type="RNAct" id="B5KM66">
    <property type="molecule type" value="protein"/>
</dbReference>
<dbReference type="Bgee" id="ENSMUSG00000078938">
    <property type="expression patterns" value="Expressed in seminiferous tubule of testis and 24 other cell types or tissues"/>
</dbReference>
<dbReference type="ExpressionAtlas" id="B5KM66">
    <property type="expression patterns" value="baseline and differential"/>
</dbReference>
<dbReference type="GO" id="GO:0000801">
    <property type="term" value="C:central element"/>
    <property type="evidence" value="ECO:0000314"/>
    <property type="project" value="UniProtKB"/>
</dbReference>
<dbReference type="GO" id="GO:0005694">
    <property type="term" value="C:chromosome"/>
    <property type="evidence" value="ECO:0000314"/>
    <property type="project" value="UniProtKB"/>
</dbReference>
<dbReference type="GO" id="GO:0005654">
    <property type="term" value="C:nucleoplasm"/>
    <property type="evidence" value="ECO:0000304"/>
    <property type="project" value="Reactome"/>
</dbReference>
<dbReference type="GO" id="GO:0005634">
    <property type="term" value="C:nucleus"/>
    <property type="evidence" value="ECO:0000314"/>
    <property type="project" value="UniProtKB"/>
</dbReference>
<dbReference type="GO" id="GO:0006915">
    <property type="term" value="P:apoptotic process"/>
    <property type="evidence" value="ECO:0000314"/>
    <property type="project" value="MGI"/>
</dbReference>
<dbReference type="GO" id="GO:0051301">
    <property type="term" value="P:cell division"/>
    <property type="evidence" value="ECO:0007669"/>
    <property type="project" value="UniProtKB-KW"/>
</dbReference>
<dbReference type="GO" id="GO:0035234">
    <property type="term" value="P:ectopic germ cell programmed cell death"/>
    <property type="evidence" value="ECO:0000314"/>
    <property type="project" value="MGI"/>
</dbReference>
<dbReference type="GO" id="GO:0043065">
    <property type="term" value="P:positive regulation of apoptotic process"/>
    <property type="evidence" value="ECO:0000314"/>
    <property type="project" value="MGI"/>
</dbReference>
<dbReference type="GO" id="GO:0051094">
    <property type="term" value="P:positive regulation of developmental process"/>
    <property type="evidence" value="ECO:0000314"/>
    <property type="project" value="MGI"/>
</dbReference>
<dbReference type="GO" id="GO:2000243">
    <property type="term" value="P:positive regulation of reproductive process"/>
    <property type="evidence" value="ECO:0000314"/>
    <property type="project" value="MGI"/>
</dbReference>
<dbReference type="GO" id="GO:0007131">
    <property type="term" value="P:reciprocal meiotic recombination"/>
    <property type="evidence" value="ECO:0000315"/>
    <property type="project" value="UniProtKB"/>
</dbReference>
<dbReference type="GO" id="GO:0007283">
    <property type="term" value="P:spermatogenesis"/>
    <property type="evidence" value="ECO:0000315"/>
    <property type="project" value="UniProtKB"/>
</dbReference>
<dbReference type="GO" id="GO:0007130">
    <property type="term" value="P:synaptonemal complex assembly"/>
    <property type="evidence" value="ECO:0000315"/>
    <property type="project" value="UniProtKB"/>
</dbReference>
<dbReference type="InterPro" id="IPR028145">
    <property type="entry name" value="Synaptonemal_3"/>
</dbReference>
<dbReference type="PANTHER" id="PTHR36686">
    <property type="entry name" value="SYNAPTONEMAL COMPLEX CENTRAL ELEMENT PROTEIN 3"/>
    <property type="match status" value="1"/>
</dbReference>
<dbReference type="PANTHER" id="PTHR36686:SF1">
    <property type="entry name" value="SYNAPTONEMAL COMPLEX CENTRAL ELEMENT PROTEIN 3"/>
    <property type="match status" value="1"/>
</dbReference>
<dbReference type="Pfam" id="PF15191">
    <property type="entry name" value="Synaptonemal_3"/>
    <property type="match status" value="1"/>
</dbReference>
<evidence type="ECO:0000250" key="1">
    <source>
        <dbReference type="UniProtKB" id="A1L190"/>
    </source>
</evidence>
<evidence type="ECO:0000255" key="2"/>
<evidence type="ECO:0000269" key="3">
    <source>
    </source>
</evidence>
<evidence type="ECO:0000269" key="4">
    <source>
    </source>
</evidence>
<evidence type="ECO:0000269" key="5">
    <source>
    </source>
</evidence>
<evidence type="ECO:0000269" key="6">
    <source>
    </source>
</evidence>
<evidence type="ECO:0000269" key="7">
    <source>
    </source>
</evidence>
<evidence type="ECO:0000269" key="8">
    <source>
    </source>
</evidence>
<evidence type="ECO:0000303" key="9">
    <source>
    </source>
</evidence>
<evidence type="ECO:0000312" key="10">
    <source>
        <dbReference type="MGI" id="MGI:1922709"/>
    </source>
</evidence>
<evidence type="ECO:0000312" key="11">
    <source>
        <dbReference type="PDB" id="4R3Q"/>
    </source>
</evidence>
<evidence type="ECO:0007829" key="12">
    <source>
        <dbReference type="PDB" id="4R3Q"/>
    </source>
</evidence>
<name>SYCE3_MOUSE</name>
<accession>B5KM66</accession>
<keyword id="KW-0002">3D-structure</keyword>
<keyword id="KW-0131">Cell cycle</keyword>
<keyword id="KW-0132">Cell division</keyword>
<keyword id="KW-0158">Chromosome</keyword>
<keyword id="KW-0175">Coiled coil</keyword>
<keyword id="KW-0469">Meiosis</keyword>
<keyword id="KW-0539">Nucleus</keyword>
<keyword id="KW-1185">Reference proteome</keyword>
<gene>
    <name evidence="10" type="primary">Syce3</name>
    <name evidence="9" type="synonym">Tseg2</name>
</gene>
<proteinExistence type="evidence at protein level"/>
<protein>
    <recommendedName>
        <fullName evidence="10">Synaptonemal complex central element protein 3</fullName>
    </recommendedName>
    <alternativeName>
        <fullName evidence="9">Testis-specific expressed protein 2</fullName>
        <shortName evidence="9">TSEG-2</shortName>
    </alternativeName>
</protein>
<reference key="1">
    <citation type="journal article" date="2009" name="Zhonghua Nan Ke Xue">
        <title>Cloning and expression of a novel mouse testis gene TSEG-2.</title>
        <authorList>
            <person name="Wang Z.Y."/>
            <person name="Tong Q.S."/>
            <person name="Zeng F.Q."/>
            <person name="Liu Y."/>
            <person name="Gu Z.H."/>
            <person name="Zheng L.D."/>
            <person name="Cai J.B."/>
            <person name="Jiang G.S."/>
        </authorList>
    </citation>
    <scope>NUCLEOTIDE SEQUENCE [MRNA]</scope>
    <source>
        <strain>BALB/cJ</strain>
        <tissue>Testis</tissue>
    </source>
</reference>
<reference key="2">
    <citation type="journal article" date="2010" name="J. Huazhong Univ. Sci. Technol. Med. Sci.">
        <title>Expression pattern of testis-specific expressed gene 2 in cryptorchidism model and its role in apoptosis of spermatogenic cells.</title>
        <authorList>
            <person name="Hu T."/>
            <person name="Wang Z."/>
            <person name="Zeng F."/>
            <person name="Chen X."/>
            <person name="Gu Z."/>
            <person name="Zheng L."/>
            <person name="Tong Q."/>
        </authorList>
    </citation>
    <scope>FUNCTION</scope>
    <scope>TISSUE SPECIFICITY</scope>
    <scope>INDUCTION</scope>
</reference>
<reference key="3">
    <citation type="journal article" date="2011" name="PLoS Genet.">
        <title>A novel mouse synaptonemal complex protein is essential for loading of central element proteins, recombination, and fertility.</title>
        <authorList>
            <person name="Schramm S."/>
            <person name="Fraune J."/>
            <person name="Naumann R."/>
            <person name="Hernandez-Hernandez A."/>
            <person name="Hoog C."/>
            <person name="Cooke H.J."/>
            <person name="Alsheimer M."/>
            <person name="Benavente R."/>
        </authorList>
    </citation>
    <scope>FUNCTION</scope>
    <scope>INTERACTION WITH SYCE1 AND SYCE2</scope>
    <scope>SUBCELLULAR LOCATION</scope>
    <scope>TISSUE SPECIFICITY</scope>
    <scope>DEVELOPMENTAL STAGE</scope>
    <scope>INDUCTION</scope>
    <scope>DISRUPTION PHENOTYPE</scope>
</reference>
<reference key="4">
    <citation type="journal article" date="2019" name="Nucleic Acids Res.">
        <title>SCRE serves as a unique synaptonemal complex fastener and is essential for progression of meiosis prophase I in mice.</title>
        <authorList>
            <person name="Liu H."/>
            <person name="Huang T."/>
            <person name="Li M."/>
            <person name="Li M."/>
            <person name="Zhang C."/>
            <person name="Jiang J."/>
            <person name="Yu X."/>
            <person name="Yin Y."/>
            <person name="Zhang F."/>
            <person name="Lu G."/>
            <person name="Luo M.C."/>
            <person name="Zhang L.R."/>
            <person name="Li J."/>
            <person name="Liu K."/>
            <person name="Chen Z.J."/>
        </authorList>
    </citation>
    <scope>SUBCELLULAR LOCATION</scope>
    <scope>INTERACTION WITH SPO16</scope>
</reference>
<reference key="5">
    <citation type="journal article" date="2019" name="PLoS Genet.">
        <title>The PSMA8 subunit of the spermatoproteasome is essential for proper meiotic exit and mouse fertility.</title>
        <authorList>
            <person name="Gomez-H L."/>
            <person name="Felipe-Medina N."/>
            <person name="Condezo Y.B."/>
            <person name="Garcia-Valiente R."/>
            <person name="Ramos I."/>
            <person name="Suja J.A."/>
            <person name="Barbero J.L."/>
            <person name="Roig I."/>
            <person name="Sanchez-Martin M."/>
            <person name="de Rooij D.G."/>
            <person name="Llano E."/>
            <person name="Pendas A.M."/>
        </authorList>
    </citation>
    <scope>INTERACTION WITH PSMA8</scope>
</reference>
<reference key="6">
    <citation type="journal article" date="2023" name="Nat. Struct. Mol. Biol.">
        <title>Structural maturation of SYCP1-mediated meiotic chromosome synapsis by SYCE3.</title>
        <authorList>
            <person name="Crichton J.H."/>
            <person name="Dunce J.M."/>
            <person name="Dunne O.M."/>
            <person name="Salmon L.J."/>
            <person name="Devenney P.S."/>
            <person name="Lawson J."/>
            <person name="Adams I.R."/>
            <person name="Davies O.R."/>
        </authorList>
    </citation>
    <scope>FUNCTION</scope>
</reference>
<reference evidence="11" key="7">
    <citation type="journal article" date="2014" name="Sci. Rep.">
        <title>Structural insight into the central element assembly of the synaptonemal complex.</title>
        <authorList>
            <person name="Lu J."/>
            <person name="Gu Y."/>
            <person name="Feng J."/>
            <person name="Zhou W."/>
            <person name="Yang X."/>
            <person name="Shen Y."/>
        </authorList>
    </citation>
    <scope>X-RAY CRYSTALLOGRAPHY (1.90 ANGSTROMS)</scope>
    <scope>SUBUNIT</scope>
</reference>
<feature type="chain" id="PRO_0000367275" description="Synaptonemal complex central element protein 3">
    <location>
        <begin position="1"/>
        <end position="88"/>
    </location>
</feature>
<feature type="coiled-coil region" evidence="2">
    <location>
        <begin position="8"/>
        <end position="75"/>
    </location>
</feature>
<feature type="helix" evidence="12">
    <location>
        <begin position="14"/>
        <end position="48"/>
    </location>
</feature>
<feature type="helix" evidence="12">
    <location>
        <begin position="55"/>
        <end position="83"/>
    </location>
</feature>
<comment type="function">
    <text evidence="1 3 4 8">Major component of the transverse central element of synaptonemal complexes (SCS), formed between homologous chromosomes during meiotic prophase (PubMed:21637789, PubMed:36635604). Required for the assembly of the central element of the synaptonemal complex during meiosis, via remodeling of SYCP1 lattice structures and promoting recruitment of SYCE2-TEX12 and SYCE1-SIX60S1 complexes (By similarity). Required for chromosome loading of the central element-specific SCS proteins, and for initiating synapsis between homologous chromosomes (PubMed:21637789). Chromosome loading appears to require SYCP1 (PubMed:21637789). Required for fertility and normal testis development (PubMed:21637789, PubMed:36635604). May play a role in apoptosis of spermatogenic cells and pathogenesis of cryptorchidism (PubMed:20407872).</text>
</comment>
<comment type="subunit">
    <text evidence="1 4 5 6 7">Homodimer (PubMed:25394919). Can form higher-order homooligomers (By similarity). Interacts with SYCP1 (via tetrameric core); the interaction remodels SYCP1 homotetramers to 2:1 heterotrimers with SYCE3 (By similarity). SYCP1/SYCE3 heterotrimers form lattice assemblies as part of the mature synaptonemal complex via both lateral and head-to-head interactions (By similarity). Interacts with the SYCE1-SIX6OS1 complex; the interaction recruits the SYCE1-SIX6OS1 complex to the central element of the synaptonemal complex (By similarity). Interacts with the SYCE2-TEX12 complex; the interaction promotes fibrous assembly of SYCE2-TEX12 as part of the synaptonemal complex central element (By similarity). Interacts with SYCE1 (PubMed:21637789, PubMed:25394919). Interacts with SYCE2 (PubMed:21637789). Interacts with proteasome subunit PSMA8; to participate in meiosis progression during spermatogenesis (PubMed:31437213). Interacts with SPO16 (PubMed:30949703).</text>
</comment>
<comment type="interaction">
    <interactant intactId="EBI-6128737">
        <id>B5KM66</id>
    </interactant>
    <interactant intactId="EBI-6128757">
        <id>Q9D495</id>
        <label>Syce1</label>
    </interactant>
    <organismsDiffer>false</organismsDiffer>
    <experiments>2</experiments>
</comment>
<comment type="interaction">
    <interactant intactId="EBI-6128737">
        <id>B5KM66</id>
    </interactant>
    <interactant intactId="EBI-6131573">
        <id>Q505B8</id>
        <label>Syce2</label>
    </interactant>
    <organismsDiffer>false</organismsDiffer>
    <experiments>2</experiments>
</comment>
<comment type="subcellular location">
    <subcellularLocation>
        <location evidence="4">Nucleus</location>
    </subcellularLocation>
    <subcellularLocation>
        <location evidence="4 6">Chromosome</location>
    </subcellularLocation>
    <text evidence="4">Colocalizes with SYCE1 in the central elements.</text>
</comment>
<comment type="tissue specificity">
    <text evidence="3 4">Expression is restricted to spermatocytes and is absent in spermatogonia, spermatids and spermatogonia (at protein level). Expressed in adult testis and embryonic ovary. Expressed in the convoluted seminiferous tubules in spermatogonia and spermatocytes.</text>
</comment>
<comment type="developmental stage">
    <text evidence="4">Expression in pubertal testes is first detected at day 12 coinciding with the onset of prophase I of meiosis (at protein level). Expression in spermatocytes first detected during zygotene when synapsis is initiated and persists on synapsed regions of homologous chromosomes until diplotene. In pachytene oocytes expression is also localized to synapsed chromosomes.</text>
</comment>
<comment type="induction">
    <text evidence="3 4">Up-regulated in cryptorchid testes.</text>
</comment>
<comment type="disruption phenotype">
    <text evidence="4">Mutant mice are characterized by infertility in both sexes as well as complete disruption of synapsis initiation resulting in meiotic arrest. Initiation of meiotic recombination appears normal, but its progression is severely impaired resulting in complete absence of Mlh1 foci.</text>
</comment>
<sequence>MADSDPGERSYDNMLKMLSDLNKDLEKLLEEMEKISVQATWMAYDMVVMRTNPTLAESMRRLEDAFLNCKEEMEKNWQELLTETKRKQ</sequence>
<organism>
    <name type="scientific">Mus musculus</name>
    <name type="common">Mouse</name>
    <dbReference type="NCBI Taxonomy" id="10090"/>
    <lineage>
        <taxon>Eukaryota</taxon>
        <taxon>Metazoa</taxon>
        <taxon>Chordata</taxon>
        <taxon>Craniata</taxon>
        <taxon>Vertebrata</taxon>
        <taxon>Euteleostomi</taxon>
        <taxon>Mammalia</taxon>
        <taxon>Eutheria</taxon>
        <taxon>Euarchontoglires</taxon>
        <taxon>Glires</taxon>
        <taxon>Rodentia</taxon>
        <taxon>Myomorpha</taxon>
        <taxon>Muroidea</taxon>
        <taxon>Muridae</taxon>
        <taxon>Murinae</taxon>
        <taxon>Mus</taxon>
        <taxon>Mus</taxon>
    </lineage>
</organism>